<comment type="function">
    <text evidence="1">Catalyzes the attachment of L-aspartate to tRNA(Asp) in a two-step reaction: L-aspartate is first activated by ATP to form Asp-AMP and then transferred to the acceptor end of tRNA(Asp).</text>
</comment>
<comment type="catalytic activity">
    <reaction evidence="1">
        <text>tRNA(Asp) + L-aspartate + ATP = L-aspartyl-tRNA(Asp) + AMP + diphosphate</text>
        <dbReference type="Rhea" id="RHEA:19649"/>
        <dbReference type="Rhea" id="RHEA-COMP:9660"/>
        <dbReference type="Rhea" id="RHEA-COMP:9678"/>
        <dbReference type="ChEBI" id="CHEBI:29991"/>
        <dbReference type="ChEBI" id="CHEBI:30616"/>
        <dbReference type="ChEBI" id="CHEBI:33019"/>
        <dbReference type="ChEBI" id="CHEBI:78442"/>
        <dbReference type="ChEBI" id="CHEBI:78516"/>
        <dbReference type="ChEBI" id="CHEBI:456215"/>
        <dbReference type="EC" id="6.1.1.12"/>
    </reaction>
</comment>
<comment type="subunit">
    <text evidence="1">Homodimer.</text>
</comment>
<comment type="subcellular location">
    <subcellularLocation>
        <location evidence="1">Cytoplasm</location>
    </subcellularLocation>
</comment>
<comment type="similarity">
    <text evidence="1">Belongs to the class-II aminoacyl-tRNA synthetase family. Type 1 subfamily.</text>
</comment>
<name>SYD_STRP8</name>
<feature type="chain" id="PRO_0000110960" description="Aspartate--tRNA ligase">
    <location>
        <begin position="1"/>
        <end position="582"/>
    </location>
</feature>
<feature type="region of interest" description="Aspartate" evidence="1">
    <location>
        <begin position="198"/>
        <end position="201"/>
    </location>
</feature>
<feature type="binding site" evidence="1">
    <location>
        <position position="174"/>
    </location>
    <ligand>
        <name>L-aspartate</name>
        <dbReference type="ChEBI" id="CHEBI:29991"/>
    </ligand>
</feature>
<feature type="binding site" evidence="1">
    <location>
        <begin position="220"/>
        <end position="222"/>
    </location>
    <ligand>
        <name>ATP</name>
        <dbReference type="ChEBI" id="CHEBI:30616"/>
    </ligand>
</feature>
<feature type="binding site" evidence="1">
    <location>
        <position position="220"/>
    </location>
    <ligand>
        <name>L-aspartate</name>
        <dbReference type="ChEBI" id="CHEBI:29991"/>
    </ligand>
</feature>
<feature type="binding site" evidence="1">
    <location>
        <position position="229"/>
    </location>
    <ligand>
        <name>ATP</name>
        <dbReference type="ChEBI" id="CHEBI:30616"/>
    </ligand>
</feature>
<feature type="binding site" evidence="1">
    <location>
        <position position="443"/>
    </location>
    <ligand>
        <name>L-aspartate</name>
        <dbReference type="ChEBI" id="CHEBI:29991"/>
    </ligand>
</feature>
<feature type="binding site" evidence="1">
    <location>
        <position position="477"/>
    </location>
    <ligand>
        <name>ATP</name>
        <dbReference type="ChEBI" id="CHEBI:30616"/>
    </ligand>
</feature>
<feature type="binding site" evidence="1">
    <location>
        <position position="484"/>
    </location>
    <ligand>
        <name>L-aspartate</name>
        <dbReference type="ChEBI" id="CHEBI:29991"/>
    </ligand>
</feature>
<feature type="binding site" evidence="1">
    <location>
        <begin position="529"/>
        <end position="532"/>
    </location>
    <ligand>
        <name>ATP</name>
        <dbReference type="ChEBI" id="CHEBI:30616"/>
    </ligand>
</feature>
<protein>
    <recommendedName>
        <fullName evidence="1">Aspartate--tRNA ligase</fullName>
        <ecNumber evidence="1">6.1.1.12</ecNumber>
    </recommendedName>
    <alternativeName>
        <fullName evidence="1">Aspartyl-tRNA synthetase</fullName>
        <shortName evidence="1">AspRS</shortName>
    </alternativeName>
</protein>
<reference key="1">
    <citation type="journal article" date="2002" name="Proc. Natl. Acad. Sci. U.S.A.">
        <title>Genome sequence and comparative microarray analysis of serotype M18 group A Streptococcus strains associated with acute rheumatic fever outbreaks.</title>
        <authorList>
            <person name="Smoot J.C."/>
            <person name="Barbian K.D."/>
            <person name="Van Gompel J.J."/>
            <person name="Smoot L.M."/>
            <person name="Chaussee M.S."/>
            <person name="Sylva G.L."/>
            <person name="Sturdevant D.E."/>
            <person name="Ricklefs S.M."/>
            <person name="Porcella S.F."/>
            <person name="Parkins L.D."/>
            <person name="Beres S.B."/>
            <person name="Campbell D.S."/>
            <person name="Smith T.M."/>
            <person name="Zhang Q."/>
            <person name="Kapur V."/>
            <person name="Daly J.A."/>
            <person name="Veasy L.G."/>
            <person name="Musser J.M."/>
        </authorList>
    </citation>
    <scope>NUCLEOTIDE SEQUENCE [LARGE SCALE GENOMIC DNA]</scope>
    <source>
        <strain>MGAS8232</strain>
    </source>
</reference>
<sequence>MKRSMYAGRVREEHIGTTITLKGWVSRRRDLGGLIFIDLRDREGVMQLVINPEEVSSDVMATAERLRSEYVIEVEGFVEARQQANDKLATGMVELKVSALTILNTAKTTPFEIKDDVEVSDDTRLRYRYLDLRRPEMLENFKLRAKVTHSIRNYLDDLEFIDVETPMLTKSTPEGARDYLVPSRVSQGHFYALPQSPQITKQLLMNAGFDRYYQIVKCFRDEDLRGDRQPEFTQVDLETSFLSEQEIQDIVEGMIAKVMKETKEIDVTLPFPRMSYDVAMNSYGSDKPDTRFEMLLQDLTVTVKGIDFKVFSEAPAVKAIVVKGNADRYSRKDIDKLTEFAKQFGAKGLAWVKVTDGQLAGPVAKFLTAIETELSSQLKLAENDLVLFVADTLEVANNTLGALRNRIAKDLDMIDQSQFNFLWVVDWPMFEWSEEEGRYMSAHHPFTLPTPESAHELEGDLAKVRAIAYDIVLNGYELGGGSLRINQKEMQERMFKALGFTADEANDQFGFLLEAMDYGFPPHGGLAIGLDRFVMLLAGKDNIREVIAFPKNNKASDPMTQAPSLVSENQLEELSLQIESHD</sequence>
<evidence type="ECO:0000255" key="1">
    <source>
        <dbReference type="HAMAP-Rule" id="MF_00044"/>
    </source>
</evidence>
<organism>
    <name type="scientific">Streptococcus pyogenes serotype M18 (strain MGAS8232)</name>
    <dbReference type="NCBI Taxonomy" id="186103"/>
    <lineage>
        <taxon>Bacteria</taxon>
        <taxon>Bacillati</taxon>
        <taxon>Bacillota</taxon>
        <taxon>Bacilli</taxon>
        <taxon>Lactobacillales</taxon>
        <taxon>Streptococcaceae</taxon>
        <taxon>Streptococcus</taxon>
    </lineage>
</organism>
<keyword id="KW-0030">Aminoacyl-tRNA synthetase</keyword>
<keyword id="KW-0067">ATP-binding</keyword>
<keyword id="KW-0963">Cytoplasm</keyword>
<keyword id="KW-0436">Ligase</keyword>
<keyword id="KW-0547">Nucleotide-binding</keyword>
<keyword id="KW-0648">Protein biosynthesis</keyword>
<dbReference type="EC" id="6.1.1.12" evidence="1"/>
<dbReference type="EMBL" id="AE009949">
    <property type="protein sequence ID" value="AAL98632.1"/>
    <property type="molecule type" value="Genomic_DNA"/>
</dbReference>
<dbReference type="RefSeq" id="WP_009880608.1">
    <property type="nucleotide sequence ID" value="NC_003485.1"/>
</dbReference>
<dbReference type="SMR" id="Q8NZ20"/>
<dbReference type="KEGG" id="spm:spyM18_2188"/>
<dbReference type="HOGENOM" id="CLU_014330_3_2_9"/>
<dbReference type="GO" id="GO:0005737">
    <property type="term" value="C:cytoplasm"/>
    <property type="evidence" value="ECO:0007669"/>
    <property type="project" value="UniProtKB-SubCell"/>
</dbReference>
<dbReference type="GO" id="GO:0004815">
    <property type="term" value="F:aspartate-tRNA ligase activity"/>
    <property type="evidence" value="ECO:0007669"/>
    <property type="project" value="UniProtKB-UniRule"/>
</dbReference>
<dbReference type="GO" id="GO:0005524">
    <property type="term" value="F:ATP binding"/>
    <property type="evidence" value="ECO:0007669"/>
    <property type="project" value="UniProtKB-UniRule"/>
</dbReference>
<dbReference type="GO" id="GO:0140096">
    <property type="term" value="F:catalytic activity, acting on a protein"/>
    <property type="evidence" value="ECO:0007669"/>
    <property type="project" value="UniProtKB-ARBA"/>
</dbReference>
<dbReference type="GO" id="GO:0003676">
    <property type="term" value="F:nucleic acid binding"/>
    <property type="evidence" value="ECO:0007669"/>
    <property type="project" value="InterPro"/>
</dbReference>
<dbReference type="GO" id="GO:0016740">
    <property type="term" value="F:transferase activity"/>
    <property type="evidence" value="ECO:0007669"/>
    <property type="project" value="UniProtKB-ARBA"/>
</dbReference>
<dbReference type="GO" id="GO:0006422">
    <property type="term" value="P:aspartyl-tRNA aminoacylation"/>
    <property type="evidence" value="ECO:0007669"/>
    <property type="project" value="UniProtKB-UniRule"/>
</dbReference>
<dbReference type="CDD" id="cd00777">
    <property type="entry name" value="AspRS_core"/>
    <property type="match status" value="1"/>
</dbReference>
<dbReference type="CDD" id="cd04317">
    <property type="entry name" value="EcAspRS_like_N"/>
    <property type="match status" value="1"/>
</dbReference>
<dbReference type="Gene3D" id="3.30.930.10">
    <property type="entry name" value="Bira Bifunctional Protein, Domain 2"/>
    <property type="match status" value="1"/>
</dbReference>
<dbReference type="Gene3D" id="3.30.1360.30">
    <property type="entry name" value="GAD-like domain"/>
    <property type="match status" value="1"/>
</dbReference>
<dbReference type="Gene3D" id="2.40.50.140">
    <property type="entry name" value="Nucleic acid-binding proteins"/>
    <property type="match status" value="1"/>
</dbReference>
<dbReference type="HAMAP" id="MF_00044">
    <property type="entry name" value="Asp_tRNA_synth_type1"/>
    <property type="match status" value="1"/>
</dbReference>
<dbReference type="InterPro" id="IPR004364">
    <property type="entry name" value="Aa-tRNA-synt_II"/>
</dbReference>
<dbReference type="InterPro" id="IPR006195">
    <property type="entry name" value="aa-tRNA-synth_II"/>
</dbReference>
<dbReference type="InterPro" id="IPR045864">
    <property type="entry name" value="aa-tRNA-synth_II/BPL/LPL"/>
</dbReference>
<dbReference type="InterPro" id="IPR004524">
    <property type="entry name" value="Asp-tRNA-ligase_1"/>
</dbReference>
<dbReference type="InterPro" id="IPR047089">
    <property type="entry name" value="Asp-tRNA-ligase_1_N"/>
</dbReference>
<dbReference type="InterPro" id="IPR002312">
    <property type="entry name" value="Asp/Asn-tRNA-synth_IIb"/>
</dbReference>
<dbReference type="InterPro" id="IPR047090">
    <property type="entry name" value="AspRS_core"/>
</dbReference>
<dbReference type="InterPro" id="IPR004115">
    <property type="entry name" value="GAD-like_sf"/>
</dbReference>
<dbReference type="InterPro" id="IPR029351">
    <property type="entry name" value="GAD_dom"/>
</dbReference>
<dbReference type="InterPro" id="IPR012340">
    <property type="entry name" value="NA-bd_OB-fold"/>
</dbReference>
<dbReference type="InterPro" id="IPR004365">
    <property type="entry name" value="NA-bd_OB_tRNA"/>
</dbReference>
<dbReference type="NCBIfam" id="TIGR00459">
    <property type="entry name" value="aspS_bact"/>
    <property type="match status" value="1"/>
</dbReference>
<dbReference type="NCBIfam" id="NF001750">
    <property type="entry name" value="PRK00476.1"/>
    <property type="match status" value="1"/>
</dbReference>
<dbReference type="PANTHER" id="PTHR22594:SF5">
    <property type="entry name" value="ASPARTATE--TRNA LIGASE, MITOCHONDRIAL"/>
    <property type="match status" value="1"/>
</dbReference>
<dbReference type="PANTHER" id="PTHR22594">
    <property type="entry name" value="ASPARTYL/LYSYL-TRNA SYNTHETASE"/>
    <property type="match status" value="1"/>
</dbReference>
<dbReference type="Pfam" id="PF02938">
    <property type="entry name" value="GAD"/>
    <property type="match status" value="1"/>
</dbReference>
<dbReference type="Pfam" id="PF00152">
    <property type="entry name" value="tRNA-synt_2"/>
    <property type="match status" value="1"/>
</dbReference>
<dbReference type="Pfam" id="PF01336">
    <property type="entry name" value="tRNA_anti-codon"/>
    <property type="match status" value="1"/>
</dbReference>
<dbReference type="PRINTS" id="PR01042">
    <property type="entry name" value="TRNASYNTHASP"/>
</dbReference>
<dbReference type="SUPFAM" id="SSF55681">
    <property type="entry name" value="Class II aaRS and biotin synthetases"/>
    <property type="match status" value="1"/>
</dbReference>
<dbReference type="SUPFAM" id="SSF55261">
    <property type="entry name" value="GAD domain-like"/>
    <property type="match status" value="1"/>
</dbReference>
<dbReference type="SUPFAM" id="SSF50249">
    <property type="entry name" value="Nucleic acid-binding proteins"/>
    <property type="match status" value="1"/>
</dbReference>
<dbReference type="PROSITE" id="PS50862">
    <property type="entry name" value="AA_TRNA_LIGASE_II"/>
    <property type="match status" value="1"/>
</dbReference>
<gene>
    <name evidence="1" type="primary">aspS</name>
    <name type="ordered locus">spyM18_2188</name>
</gene>
<proteinExistence type="inferred from homology"/>
<accession>Q8NZ20</accession>